<gene>
    <name type="ordered locus">CV_3336</name>
</gene>
<organism>
    <name type="scientific">Chromobacterium violaceum (strain ATCC 12472 / DSM 30191 / JCM 1249 / CCUG 213 / NBRC 12614 / NCIMB 9131 / NCTC 9757 / MK)</name>
    <dbReference type="NCBI Taxonomy" id="243365"/>
    <lineage>
        <taxon>Bacteria</taxon>
        <taxon>Pseudomonadati</taxon>
        <taxon>Pseudomonadota</taxon>
        <taxon>Betaproteobacteria</taxon>
        <taxon>Neisseriales</taxon>
        <taxon>Chromobacteriaceae</taxon>
        <taxon>Chromobacterium</taxon>
    </lineage>
</organism>
<comment type="function">
    <text evidence="1">Displays ATPase and GTPase activities.</text>
</comment>
<comment type="similarity">
    <text evidence="1">Belongs to the RapZ-like family.</text>
</comment>
<name>Y3336_CHRVO</name>
<keyword id="KW-0067">ATP-binding</keyword>
<keyword id="KW-0342">GTP-binding</keyword>
<keyword id="KW-0547">Nucleotide-binding</keyword>
<keyword id="KW-1185">Reference proteome</keyword>
<dbReference type="EMBL" id="AE016825">
    <property type="protein sequence ID" value="AAQ61000.1"/>
    <property type="molecule type" value="Genomic_DNA"/>
</dbReference>
<dbReference type="RefSeq" id="WP_011136883.1">
    <property type="nucleotide sequence ID" value="NC_005085.1"/>
</dbReference>
<dbReference type="SMR" id="Q7NST4"/>
<dbReference type="STRING" id="243365.CV_3336"/>
<dbReference type="KEGG" id="cvi:CV_3336"/>
<dbReference type="eggNOG" id="COG1660">
    <property type="taxonomic scope" value="Bacteria"/>
</dbReference>
<dbReference type="HOGENOM" id="CLU_059558_1_1_4"/>
<dbReference type="OrthoDB" id="9784461at2"/>
<dbReference type="Proteomes" id="UP000001424">
    <property type="component" value="Chromosome"/>
</dbReference>
<dbReference type="GO" id="GO:0005524">
    <property type="term" value="F:ATP binding"/>
    <property type="evidence" value="ECO:0007669"/>
    <property type="project" value="UniProtKB-UniRule"/>
</dbReference>
<dbReference type="GO" id="GO:0005525">
    <property type="term" value="F:GTP binding"/>
    <property type="evidence" value="ECO:0007669"/>
    <property type="project" value="UniProtKB-UniRule"/>
</dbReference>
<dbReference type="Gene3D" id="3.40.50.300">
    <property type="entry name" value="P-loop containing nucleotide triphosphate hydrolases"/>
    <property type="match status" value="1"/>
</dbReference>
<dbReference type="HAMAP" id="MF_00636">
    <property type="entry name" value="RapZ_like"/>
    <property type="match status" value="1"/>
</dbReference>
<dbReference type="InterPro" id="IPR027417">
    <property type="entry name" value="P-loop_NTPase"/>
</dbReference>
<dbReference type="InterPro" id="IPR005337">
    <property type="entry name" value="RapZ-like"/>
</dbReference>
<dbReference type="InterPro" id="IPR053930">
    <property type="entry name" value="RapZ-like_N"/>
</dbReference>
<dbReference type="InterPro" id="IPR053931">
    <property type="entry name" value="RapZ_C"/>
</dbReference>
<dbReference type="NCBIfam" id="NF003828">
    <property type="entry name" value="PRK05416.1"/>
    <property type="match status" value="1"/>
</dbReference>
<dbReference type="PANTHER" id="PTHR30448">
    <property type="entry name" value="RNASE ADAPTER PROTEIN RAPZ"/>
    <property type="match status" value="1"/>
</dbReference>
<dbReference type="PANTHER" id="PTHR30448:SF0">
    <property type="entry name" value="RNASE ADAPTER PROTEIN RAPZ"/>
    <property type="match status" value="1"/>
</dbReference>
<dbReference type="Pfam" id="PF22740">
    <property type="entry name" value="PapZ_C"/>
    <property type="match status" value="1"/>
</dbReference>
<dbReference type="Pfam" id="PF03668">
    <property type="entry name" value="RapZ-like_N"/>
    <property type="match status" value="1"/>
</dbReference>
<dbReference type="PIRSF" id="PIRSF005052">
    <property type="entry name" value="P-loopkin"/>
    <property type="match status" value="1"/>
</dbReference>
<dbReference type="SUPFAM" id="SSF52540">
    <property type="entry name" value="P-loop containing nucleoside triphosphate hydrolases"/>
    <property type="match status" value="1"/>
</dbReference>
<protein>
    <recommendedName>
        <fullName evidence="1">Nucleotide-binding protein CV_3336</fullName>
    </recommendedName>
</protein>
<sequence>MRLILISGLSGSGKSVALRALEDSGFYCVDNLPATMLPEAMAMYDDFGYQDIAISVDTRSGPSLGALPQVVEGLKTQGIDVRLLFLEAKPETLVKRFSETRRRHPLSGSGITVEESILLEQEMLADVLELGTRIDTSELSANALRSWVRELVDADGNRLTLIFESFGFKHGVPQDADFVFDARCLPNPYYDPQLRPFTGRDEPIIDFFSGNKAVAEMIADIQAMIAKWLPCYGKENRSYLTVAVGCTGGQHRSVYIIENLARAFSDRQVLVRHRQLYREH</sequence>
<proteinExistence type="inferred from homology"/>
<evidence type="ECO:0000255" key="1">
    <source>
        <dbReference type="HAMAP-Rule" id="MF_00636"/>
    </source>
</evidence>
<accession>Q7NST4</accession>
<reference key="1">
    <citation type="journal article" date="2003" name="Proc. Natl. Acad. Sci. U.S.A.">
        <title>The complete genome sequence of Chromobacterium violaceum reveals remarkable and exploitable bacterial adaptability.</title>
        <authorList>
            <person name="Vasconcelos A.T.R."/>
            <person name="de Almeida D.F."/>
            <person name="Hungria M."/>
            <person name="Guimaraes C.T."/>
            <person name="Antonio R.V."/>
            <person name="Almeida F.C."/>
            <person name="de Almeida L.G.P."/>
            <person name="de Almeida R."/>
            <person name="Alves-Gomes J.A."/>
            <person name="Andrade E.M."/>
            <person name="Araripe J."/>
            <person name="de Araujo M.F.F."/>
            <person name="Astolfi-Filho S."/>
            <person name="Azevedo V."/>
            <person name="Baptista A.J."/>
            <person name="Bataus L.A.M."/>
            <person name="Batista J.S."/>
            <person name="Belo A."/>
            <person name="van den Berg C."/>
            <person name="Bogo M."/>
            <person name="Bonatto S."/>
            <person name="Bordignon J."/>
            <person name="Brigido M.M."/>
            <person name="Brito C.A."/>
            <person name="Brocchi M."/>
            <person name="Burity H.A."/>
            <person name="Camargo A.A."/>
            <person name="Cardoso D.D.P."/>
            <person name="Carneiro N.P."/>
            <person name="Carraro D.M."/>
            <person name="Carvalho C.M.B."/>
            <person name="Cascardo J.C.M."/>
            <person name="Cavada B.S."/>
            <person name="Chueire L.M.O."/>
            <person name="Creczynski-Pasa T.B."/>
            <person name="Cunha-Junior N.C."/>
            <person name="Fagundes N."/>
            <person name="Falcao C.L."/>
            <person name="Fantinatti F."/>
            <person name="Farias I.P."/>
            <person name="Felipe M.S.S."/>
            <person name="Ferrari L.P."/>
            <person name="Ferro J.A."/>
            <person name="Ferro M.I.T."/>
            <person name="Franco G.R."/>
            <person name="Freitas N.S.A."/>
            <person name="Furlan L.R."/>
            <person name="Gazzinelli R.T."/>
            <person name="Gomes E.A."/>
            <person name="Goncalves P.R."/>
            <person name="Grangeiro T.B."/>
            <person name="Grattapaglia D."/>
            <person name="Grisard E.C."/>
            <person name="Hanna E.S."/>
            <person name="Jardim S.N."/>
            <person name="Laurino J."/>
            <person name="Leoi L.C.T."/>
            <person name="Lima L.F.A."/>
            <person name="Loureiro M.F."/>
            <person name="Lyra M.C.C.P."/>
            <person name="Madeira H.M.F."/>
            <person name="Manfio G.P."/>
            <person name="Maranhao A.Q."/>
            <person name="Martins W.S."/>
            <person name="di Mauro S.M.Z."/>
            <person name="de Medeiros S.R.B."/>
            <person name="Meissner R.V."/>
            <person name="Moreira M.A.M."/>
            <person name="Nascimento F.F."/>
            <person name="Nicolas M.F."/>
            <person name="Oliveira J.G."/>
            <person name="Oliveira S.C."/>
            <person name="Paixao R.F.C."/>
            <person name="Parente J.A."/>
            <person name="Pedrosa F.O."/>
            <person name="Pena S.D.J."/>
            <person name="Pereira J.O."/>
            <person name="Pereira M."/>
            <person name="Pinto L.S.R.C."/>
            <person name="Pinto L.S."/>
            <person name="Porto J.I.R."/>
            <person name="Potrich D.P."/>
            <person name="Ramalho-Neto C.E."/>
            <person name="Reis A.M.M."/>
            <person name="Rigo L.U."/>
            <person name="Rondinelli E."/>
            <person name="Santos E.B.P."/>
            <person name="Santos F.R."/>
            <person name="Schneider M.P.C."/>
            <person name="Seuanez H.N."/>
            <person name="Silva A.M.R."/>
            <person name="da Silva A.L.C."/>
            <person name="Silva D.W."/>
            <person name="Silva R."/>
            <person name="Simoes I.C."/>
            <person name="Simon D."/>
            <person name="Soares C.M.A."/>
            <person name="Soares R.B.A."/>
            <person name="Souza E.M."/>
            <person name="Souza K.R.L."/>
            <person name="Souza R.C."/>
            <person name="Steffens M.B.R."/>
            <person name="Steindel M."/>
            <person name="Teixeira S.R."/>
            <person name="Urmenyi T."/>
            <person name="Vettore A."/>
            <person name="Wassem R."/>
            <person name="Zaha A."/>
            <person name="Simpson A.J.G."/>
        </authorList>
    </citation>
    <scope>NUCLEOTIDE SEQUENCE [LARGE SCALE GENOMIC DNA]</scope>
    <source>
        <strain>ATCC 12472 / DSM 30191 / JCM 1249 / CCUG 213 / NBRC 12614 / NCIMB 9131 / NCTC 9757 / MK</strain>
    </source>
</reference>
<feature type="chain" id="PRO_0000107696" description="Nucleotide-binding protein CV_3336">
    <location>
        <begin position="1"/>
        <end position="280"/>
    </location>
</feature>
<feature type="binding site" evidence="1">
    <location>
        <begin position="8"/>
        <end position="15"/>
    </location>
    <ligand>
        <name>ATP</name>
        <dbReference type="ChEBI" id="CHEBI:30616"/>
    </ligand>
</feature>
<feature type="binding site" evidence="1">
    <location>
        <begin position="57"/>
        <end position="60"/>
    </location>
    <ligand>
        <name>GTP</name>
        <dbReference type="ChEBI" id="CHEBI:37565"/>
    </ligand>
</feature>